<organism>
    <name type="scientific">Gallus gallus</name>
    <name type="common">Chicken</name>
    <dbReference type="NCBI Taxonomy" id="9031"/>
    <lineage>
        <taxon>Eukaryota</taxon>
        <taxon>Metazoa</taxon>
        <taxon>Chordata</taxon>
        <taxon>Craniata</taxon>
        <taxon>Vertebrata</taxon>
        <taxon>Euteleostomi</taxon>
        <taxon>Archelosauria</taxon>
        <taxon>Archosauria</taxon>
        <taxon>Dinosauria</taxon>
        <taxon>Saurischia</taxon>
        <taxon>Theropoda</taxon>
        <taxon>Coelurosauria</taxon>
        <taxon>Aves</taxon>
        <taxon>Neognathae</taxon>
        <taxon>Galloanserae</taxon>
        <taxon>Galliformes</taxon>
        <taxon>Phasianidae</taxon>
        <taxon>Phasianinae</taxon>
        <taxon>Gallus</taxon>
    </lineage>
</organism>
<name>PHOCN_CHICK</name>
<evidence type="ECO:0000250" key="1"/>
<evidence type="ECO:0000250" key="2">
    <source>
        <dbReference type="UniProtKB" id="Q9Y3A3"/>
    </source>
</evidence>
<evidence type="ECO:0000305" key="3"/>
<comment type="function">
    <text evidence="2">Part of the striatin-interacting phosphatase and kinase (STRIPAK) complexes. STRIPAK complexes have critical roles in protein (de)phosphorylation and are regulators of multiple signaling pathways including Hippo, MAPK, nuclear receptor and cytoskeleton remodeling. Different types of STRIPAK complexes are involved in a variety of biological processes such as cell growth, differentiation, apoptosis, metabolism and immune regulation.</text>
</comment>
<comment type="subunit">
    <text evidence="1 2">Part of the core of STRIPAK complexes composed of PP2A catalytic and scaffolding subunits, the striatins (PP2A regulatory subunits), the striatin-associated proteins MOB4, STRIP1 and STRIP2, PDCD10 and members of the STE20 kinases, such as STK24 and STK26.</text>
</comment>
<comment type="subcellular location">
    <subcellularLocation>
        <location>Cytoplasm</location>
    </subcellularLocation>
    <subcellularLocation>
        <location>Membrane</location>
        <topology>Peripheral membrane protein</topology>
    </subcellularLocation>
    <subcellularLocation>
        <location evidence="1">Golgi apparatus</location>
        <location evidence="1">Golgi stack membrane</location>
        <topology evidence="1">Peripheral membrane protein</topology>
    </subcellularLocation>
</comment>
<comment type="similarity">
    <text evidence="3">Belongs to the MOB1/phocein family.</text>
</comment>
<feature type="chain" id="PRO_0000247607" description="MOB-like protein phocein">
    <location>
        <begin position="1"/>
        <end position="223"/>
    </location>
</feature>
<feature type="binding site" evidence="2">
    <location>
        <position position="92"/>
    </location>
    <ligand>
        <name>Zn(2+)</name>
        <dbReference type="ChEBI" id="CHEBI:29105"/>
        <label>1</label>
    </ligand>
</feature>
<feature type="binding site" evidence="1">
    <location>
        <position position="92"/>
    </location>
    <ligand>
        <name>Zn(2+)</name>
        <dbReference type="ChEBI" id="CHEBI:29105"/>
    </ligand>
</feature>
<feature type="binding site" evidence="2">
    <location>
        <position position="97"/>
    </location>
    <ligand>
        <name>Zn(2+)</name>
        <dbReference type="ChEBI" id="CHEBI:29105"/>
        <label>1</label>
    </ligand>
</feature>
<feature type="binding site" evidence="1">
    <location>
        <position position="97"/>
    </location>
    <ligand>
        <name>Zn(2+)</name>
        <dbReference type="ChEBI" id="CHEBI:29105"/>
    </ligand>
</feature>
<feature type="binding site" evidence="2">
    <location>
        <position position="110"/>
    </location>
    <ligand>
        <name>Zn(2+)</name>
        <dbReference type="ChEBI" id="CHEBI:29105"/>
        <label>2</label>
    </ligand>
</feature>
<feature type="binding site" evidence="2">
    <location>
        <position position="113"/>
    </location>
    <ligand>
        <name>Zn(2+)</name>
        <dbReference type="ChEBI" id="CHEBI:29105"/>
        <label>2</label>
    </ligand>
</feature>
<feature type="binding site" evidence="2">
    <location>
        <position position="119"/>
    </location>
    <ligand>
        <name>Zn(2+)</name>
        <dbReference type="ChEBI" id="CHEBI:29105"/>
        <label>2</label>
    </ligand>
</feature>
<feature type="binding site" evidence="2">
    <location>
        <position position="127"/>
    </location>
    <ligand>
        <name>Zn(2+)</name>
        <dbReference type="ChEBI" id="CHEBI:29105"/>
        <label>2</label>
    </ligand>
</feature>
<feature type="binding site" evidence="2">
    <location>
        <position position="169"/>
    </location>
    <ligand>
        <name>Zn(2+)</name>
        <dbReference type="ChEBI" id="CHEBI:29105"/>
        <label>1</label>
    </ligand>
</feature>
<feature type="binding site" evidence="1">
    <location>
        <position position="169"/>
    </location>
    <ligand>
        <name>Zn(2+)</name>
        <dbReference type="ChEBI" id="CHEBI:29105"/>
    </ligand>
</feature>
<feature type="binding site" evidence="2">
    <location>
        <position position="174"/>
    </location>
    <ligand>
        <name>Zn(2+)</name>
        <dbReference type="ChEBI" id="CHEBI:29105"/>
        <label>1</label>
    </ligand>
</feature>
<feature type="binding site" evidence="1">
    <location>
        <position position="174"/>
    </location>
    <ligand>
        <name>Zn(2+)</name>
        <dbReference type="ChEBI" id="CHEBI:29105"/>
    </ligand>
</feature>
<dbReference type="EMBL" id="AJ851405">
    <property type="protein sequence ID" value="CAH65039.1"/>
    <property type="molecule type" value="mRNA"/>
</dbReference>
<dbReference type="SMR" id="Q5F495"/>
<dbReference type="FunCoup" id="Q5F495">
    <property type="interactions" value="1224"/>
</dbReference>
<dbReference type="STRING" id="9031.ENSGALP00000013177"/>
<dbReference type="PaxDb" id="9031-ENSGALP00000013177"/>
<dbReference type="VEuPathDB" id="HostDB:geneid_429007"/>
<dbReference type="eggNOG" id="KOG1852">
    <property type="taxonomic scope" value="Eukaryota"/>
</dbReference>
<dbReference type="InParanoid" id="Q5F495"/>
<dbReference type="OrthoDB" id="184876at2759"/>
<dbReference type="PhylomeDB" id="Q5F495"/>
<dbReference type="PRO" id="PR:Q5F495"/>
<dbReference type="Proteomes" id="UP000000539">
    <property type="component" value="Unassembled WGS sequence"/>
</dbReference>
<dbReference type="GO" id="GO:0005737">
    <property type="term" value="C:cytoplasm"/>
    <property type="evidence" value="ECO:0000318"/>
    <property type="project" value="GO_Central"/>
</dbReference>
<dbReference type="GO" id="GO:0090443">
    <property type="term" value="C:FAR/SIN/STRIPAK complex"/>
    <property type="evidence" value="ECO:0000250"/>
    <property type="project" value="UniProtKB"/>
</dbReference>
<dbReference type="GO" id="GO:0032580">
    <property type="term" value="C:Golgi cisterna membrane"/>
    <property type="evidence" value="ECO:0007669"/>
    <property type="project" value="UniProtKB-SubCell"/>
</dbReference>
<dbReference type="GO" id="GO:0046872">
    <property type="term" value="F:metal ion binding"/>
    <property type="evidence" value="ECO:0007669"/>
    <property type="project" value="UniProtKB-KW"/>
</dbReference>
<dbReference type="GO" id="GO:0030674">
    <property type="term" value="F:protein-macromolecule adaptor activity"/>
    <property type="evidence" value="ECO:0000250"/>
    <property type="project" value="UniProtKB"/>
</dbReference>
<dbReference type="GO" id="GO:0035331">
    <property type="term" value="P:negative regulation of hippo signaling"/>
    <property type="evidence" value="ECO:0000250"/>
    <property type="project" value="UniProtKB"/>
</dbReference>
<dbReference type="FunFam" id="1.20.140.30:FF:000002">
    <property type="entry name" value="MOB-like protein phocein isoform X1"/>
    <property type="match status" value="1"/>
</dbReference>
<dbReference type="Gene3D" id="1.20.140.30">
    <property type="entry name" value="MOB kinase activator"/>
    <property type="match status" value="1"/>
</dbReference>
<dbReference type="InterPro" id="IPR005301">
    <property type="entry name" value="MOB_kinase_act_fam"/>
</dbReference>
<dbReference type="InterPro" id="IPR036703">
    <property type="entry name" value="MOB_kinase_act_sf"/>
</dbReference>
<dbReference type="PANTHER" id="PTHR22599">
    <property type="entry name" value="MPS ONE BINDER KINASE ACTIVATOR-LIKE MOB"/>
    <property type="match status" value="1"/>
</dbReference>
<dbReference type="Pfam" id="PF03637">
    <property type="entry name" value="Mob1_phocein"/>
    <property type="match status" value="1"/>
</dbReference>
<dbReference type="SMART" id="SM01388">
    <property type="entry name" value="Mob1_phocein"/>
    <property type="match status" value="1"/>
</dbReference>
<dbReference type="SUPFAM" id="SSF101152">
    <property type="entry name" value="Mob1/phocein"/>
    <property type="match status" value="1"/>
</dbReference>
<reference key="1">
    <citation type="journal article" date="2005" name="Genome Biol.">
        <title>Full-length cDNAs from chicken bursal lymphocytes to facilitate gene function analysis.</title>
        <authorList>
            <person name="Caldwell R.B."/>
            <person name="Kierzek A.M."/>
            <person name="Arakawa H."/>
            <person name="Bezzubov Y."/>
            <person name="Zaim J."/>
            <person name="Fiedler P."/>
            <person name="Kutter S."/>
            <person name="Blagodatski A."/>
            <person name="Kostovska D."/>
            <person name="Koter M."/>
            <person name="Plachy J."/>
            <person name="Carninci P."/>
            <person name="Hayashizaki Y."/>
            <person name="Buerstedde J.-M."/>
        </authorList>
    </citation>
    <scope>NUCLEOTIDE SEQUENCE [LARGE SCALE MRNA]</scope>
    <source>
        <strain>CB</strain>
        <tissue>Bursa of Fabricius</tissue>
    </source>
</reference>
<gene>
    <name type="primary">MOB4</name>
    <name type="synonym">MOB3</name>
    <name type="synonym">MOBKL3</name>
    <name type="synonym">PHOCN</name>
    <name type="synonym">PREI3</name>
    <name type="ORF">RCJMB04_1o21</name>
</gene>
<accession>Q5F495</accession>
<protein>
    <recommendedName>
        <fullName>MOB-like protein phocein</fullName>
    </recommendedName>
    <alternativeName>
        <fullName>Mob1 homolog 3</fullName>
        <shortName>Mob3</shortName>
    </alternativeName>
    <alternativeName>
        <fullName>Mps one binder kinase activator-like 3</fullName>
    </alternativeName>
    <alternativeName>
        <fullName>Preimplantation protein 3</fullName>
    </alternativeName>
</protein>
<sequence length="223" mass="25816">MVMAEGTAVLRRNRPGTKAQDFYNWPDESFEEMDSTLAVQQYIQQNIRADCSNIDKILEPPEGQDEGVWKYEHLRQFCLELNGLAVKLQSECHPDTCTQMTATEQWIFLCAAHKTPKECPAIDYTRHTLDGAACLLNSNKYFPSRVSIKESSVAKLGSVCRRIYRIFSHAYFHHRQIFDEYENETFLCHRFTKFVMKYNLMSKDNLIVPILEEEVQNSVSGGE</sequence>
<proteinExistence type="evidence at transcript level"/>
<keyword id="KW-0963">Cytoplasm</keyword>
<keyword id="KW-0333">Golgi apparatus</keyword>
<keyword id="KW-0472">Membrane</keyword>
<keyword id="KW-0479">Metal-binding</keyword>
<keyword id="KW-1185">Reference proteome</keyword>
<keyword id="KW-0813">Transport</keyword>
<keyword id="KW-0862">Zinc</keyword>